<protein>
    <recommendedName>
        <fullName>Proline-specific permease ProY</fullName>
    </recommendedName>
</protein>
<comment type="function">
    <text evidence="1">Permease that is involved in the transport across the cytoplasmic membrane of proline.</text>
</comment>
<comment type="subcellular location">
    <subcellularLocation>
        <location evidence="1">Cell inner membrane</location>
        <topology evidence="1">Multi-pass membrane protein</topology>
    </subcellularLocation>
</comment>
<comment type="similarity">
    <text evidence="3">Belongs to the amino acid-polyamine-organocation (APC) superfamily. Amino acid transporter (AAT) (TC 2.A.3.1) family.</text>
</comment>
<feature type="chain" id="PRO_0000054208" description="Proline-specific permease ProY">
    <location>
        <begin position="1"/>
        <end position="457"/>
    </location>
</feature>
<feature type="topological domain" description="Cytoplasmic" evidence="2">
    <location>
        <begin position="1"/>
        <end position="17"/>
    </location>
</feature>
<feature type="transmembrane region" description="Helical" evidence="2">
    <location>
        <begin position="18"/>
        <end position="38"/>
    </location>
</feature>
<feature type="transmembrane region" description="Helical" evidence="2">
    <location>
        <begin position="39"/>
        <end position="59"/>
    </location>
</feature>
<feature type="topological domain" description="Cytoplasmic" evidence="2">
    <location>
        <begin position="60"/>
        <end position="84"/>
    </location>
</feature>
<feature type="transmembrane region" description="Helical" evidence="2">
    <location>
        <begin position="85"/>
        <end position="105"/>
    </location>
</feature>
<feature type="topological domain" description="Periplasmic" evidence="2">
    <location>
        <begin position="106"/>
        <end position="113"/>
    </location>
</feature>
<feature type="transmembrane region" description="Helical" evidence="2">
    <location>
        <begin position="114"/>
        <end position="134"/>
    </location>
</feature>
<feature type="topological domain" description="Cytoplasmic" evidence="2">
    <location>
        <begin position="135"/>
        <end position="156"/>
    </location>
</feature>
<feature type="transmembrane region" description="Helical" evidence="2">
    <location>
        <begin position="157"/>
        <end position="177"/>
    </location>
</feature>
<feature type="topological domain" description="Periplasmic" evidence="2">
    <location>
        <begin position="178"/>
        <end position="197"/>
    </location>
</feature>
<feature type="transmembrane region" description="Helical" evidence="2">
    <location>
        <begin position="198"/>
        <end position="218"/>
    </location>
</feature>
<feature type="topological domain" description="Cytoplasmic" evidence="2">
    <location>
        <begin position="219"/>
        <end position="242"/>
    </location>
</feature>
<feature type="transmembrane region" description="Helical" evidence="2">
    <location>
        <begin position="243"/>
        <end position="263"/>
    </location>
</feature>
<feature type="topological domain" description="Periplasmic" evidence="2">
    <location>
        <begin position="264"/>
        <end position="277"/>
    </location>
</feature>
<feature type="transmembrane region" description="Helical" evidence="2">
    <location>
        <begin position="278"/>
        <end position="298"/>
    </location>
</feature>
<feature type="topological domain" description="Cytoplasmic" evidence="2">
    <location>
        <begin position="299"/>
        <end position="331"/>
    </location>
</feature>
<feature type="transmembrane region" description="Helical" evidence="2">
    <location>
        <begin position="332"/>
        <end position="352"/>
    </location>
</feature>
<feature type="topological domain" description="Periplasmic" evidence="2">
    <location>
        <begin position="353"/>
        <end position="355"/>
    </location>
</feature>
<feature type="transmembrane region" description="Helical" evidence="2">
    <location>
        <begin position="356"/>
        <end position="376"/>
    </location>
</feature>
<feature type="topological domain" description="Cytoplasmic" evidence="2">
    <location>
        <begin position="377"/>
        <end position="399"/>
    </location>
</feature>
<feature type="transmembrane region" description="Helical" evidence="2">
    <location>
        <begin position="400"/>
        <end position="420"/>
    </location>
</feature>
<feature type="topological domain" description="Periplasmic" evidence="2">
    <location>
        <begin position="421"/>
        <end position="424"/>
    </location>
</feature>
<feature type="transmembrane region" description="Helical" evidence="2">
    <location>
        <begin position="425"/>
        <end position="445"/>
    </location>
</feature>
<feature type="topological domain" description="Cytoplasmic" evidence="2">
    <location>
        <begin position="446"/>
        <end position="457"/>
    </location>
</feature>
<organism>
    <name type="scientific">Escherichia coli O157:H7</name>
    <dbReference type="NCBI Taxonomy" id="83334"/>
    <lineage>
        <taxon>Bacteria</taxon>
        <taxon>Pseudomonadati</taxon>
        <taxon>Pseudomonadota</taxon>
        <taxon>Gammaproteobacteria</taxon>
        <taxon>Enterobacterales</taxon>
        <taxon>Enterobacteriaceae</taxon>
        <taxon>Escherichia</taxon>
    </lineage>
</organism>
<name>PROY_ECO57</name>
<gene>
    <name type="primary">proY</name>
    <name type="ordered locus">Z0500</name>
    <name type="ordered locus">ECs0452</name>
</gene>
<dbReference type="EMBL" id="AE005174">
    <property type="protein sequence ID" value="AAG54748.1"/>
    <property type="molecule type" value="Genomic_DNA"/>
</dbReference>
<dbReference type="EMBL" id="BA000007">
    <property type="protein sequence ID" value="BAB33875.1"/>
    <property type="molecule type" value="Genomic_DNA"/>
</dbReference>
<dbReference type="PIR" id="D90685">
    <property type="entry name" value="D90685"/>
</dbReference>
<dbReference type="PIR" id="H85535">
    <property type="entry name" value="H85535"/>
</dbReference>
<dbReference type="RefSeq" id="NP_308479.1">
    <property type="nucleotide sequence ID" value="NC_002695.1"/>
</dbReference>
<dbReference type="RefSeq" id="WP_001295329.1">
    <property type="nucleotide sequence ID" value="NZ_VOAI01000005.1"/>
</dbReference>
<dbReference type="SMR" id="P0AAE4"/>
<dbReference type="STRING" id="155864.Z0500"/>
<dbReference type="GeneID" id="75202824"/>
<dbReference type="GeneID" id="914554"/>
<dbReference type="KEGG" id="ece:Z0500"/>
<dbReference type="KEGG" id="ecs:ECs_0452"/>
<dbReference type="PATRIC" id="fig|386585.9.peg.552"/>
<dbReference type="eggNOG" id="COG1113">
    <property type="taxonomic scope" value="Bacteria"/>
</dbReference>
<dbReference type="HOGENOM" id="CLU_007946_9_3_6"/>
<dbReference type="OMA" id="PHWVWVL"/>
<dbReference type="Proteomes" id="UP000000558">
    <property type="component" value="Chromosome"/>
</dbReference>
<dbReference type="Proteomes" id="UP000002519">
    <property type="component" value="Chromosome"/>
</dbReference>
<dbReference type="GO" id="GO:0005886">
    <property type="term" value="C:plasma membrane"/>
    <property type="evidence" value="ECO:0007669"/>
    <property type="project" value="UniProtKB-SubCell"/>
</dbReference>
<dbReference type="GO" id="GO:0006865">
    <property type="term" value="P:amino acid transport"/>
    <property type="evidence" value="ECO:0007669"/>
    <property type="project" value="UniProtKB-KW"/>
</dbReference>
<dbReference type="GO" id="GO:0055085">
    <property type="term" value="P:transmembrane transport"/>
    <property type="evidence" value="ECO:0007669"/>
    <property type="project" value="InterPro"/>
</dbReference>
<dbReference type="FunFam" id="1.20.1740.10:FF:000001">
    <property type="entry name" value="Amino acid permease"/>
    <property type="match status" value="1"/>
</dbReference>
<dbReference type="Gene3D" id="1.20.1740.10">
    <property type="entry name" value="Amino acid/polyamine transporter I"/>
    <property type="match status" value="1"/>
</dbReference>
<dbReference type="InterPro" id="IPR004841">
    <property type="entry name" value="AA-permease/SLC12A_dom"/>
</dbReference>
<dbReference type="InterPro" id="IPR004840">
    <property type="entry name" value="Amino_acid_permease_CS"/>
</dbReference>
<dbReference type="NCBIfam" id="NF007876">
    <property type="entry name" value="PRK10580.1"/>
    <property type="match status" value="1"/>
</dbReference>
<dbReference type="PANTHER" id="PTHR43495">
    <property type="entry name" value="GABA PERMEASE"/>
    <property type="match status" value="1"/>
</dbReference>
<dbReference type="PANTHER" id="PTHR43495:SF6">
    <property type="entry name" value="THREONINE_SERINE TRANSPORTER YBXG-RELATED"/>
    <property type="match status" value="1"/>
</dbReference>
<dbReference type="Pfam" id="PF00324">
    <property type="entry name" value="AA_permease"/>
    <property type="match status" value="1"/>
</dbReference>
<dbReference type="PIRSF" id="PIRSF006060">
    <property type="entry name" value="AA_transporter"/>
    <property type="match status" value="1"/>
</dbReference>
<dbReference type="PROSITE" id="PS00218">
    <property type="entry name" value="AMINO_ACID_PERMEASE_1"/>
    <property type="match status" value="1"/>
</dbReference>
<evidence type="ECO:0000250" key="1"/>
<evidence type="ECO:0000255" key="2"/>
<evidence type="ECO:0000305" key="3"/>
<keyword id="KW-0029">Amino-acid transport</keyword>
<keyword id="KW-0997">Cell inner membrane</keyword>
<keyword id="KW-1003">Cell membrane</keyword>
<keyword id="KW-0472">Membrane</keyword>
<keyword id="KW-1185">Reference proteome</keyword>
<keyword id="KW-0812">Transmembrane</keyword>
<keyword id="KW-1133">Transmembrane helix</keyword>
<keyword id="KW-0813">Transport</keyword>
<proteinExistence type="inferred from homology"/>
<accession>P0AAE4</accession>
<accession>P77327</accession>
<reference key="1">
    <citation type="journal article" date="2001" name="Nature">
        <title>Genome sequence of enterohaemorrhagic Escherichia coli O157:H7.</title>
        <authorList>
            <person name="Perna N.T."/>
            <person name="Plunkett G. III"/>
            <person name="Burland V."/>
            <person name="Mau B."/>
            <person name="Glasner J.D."/>
            <person name="Rose D.J."/>
            <person name="Mayhew G.F."/>
            <person name="Evans P.S."/>
            <person name="Gregor J."/>
            <person name="Kirkpatrick H.A."/>
            <person name="Posfai G."/>
            <person name="Hackett J."/>
            <person name="Klink S."/>
            <person name="Boutin A."/>
            <person name="Shao Y."/>
            <person name="Miller L."/>
            <person name="Grotbeck E.J."/>
            <person name="Davis N.W."/>
            <person name="Lim A."/>
            <person name="Dimalanta E.T."/>
            <person name="Potamousis K."/>
            <person name="Apodaca J."/>
            <person name="Anantharaman T.S."/>
            <person name="Lin J."/>
            <person name="Yen G."/>
            <person name="Schwartz D.C."/>
            <person name="Welch R.A."/>
            <person name="Blattner F.R."/>
        </authorList>
    </citation>
    <scope>NUCLEOTIDE SEQUENCE [LARGE SCALE GENOMIC DNA]</scope>
    <source>
        <strain>O157:H7 / EDL933 / ATCC 700927 / EHEC</strain>
    </source>
</reference>
<reference key="2">
    <citation type="journal article" date="2001" name="DNA Res.">
        <title>Complete genome sequence of enterohemorrhagic Escherichia coli O157:H7 and genomic comparison with a laboratory strain K-12.</title>
        <authorList>
            <person name="Hayashi T."/>
            <person name="Makino K."/>
            <person name="Ohnishi M."/>
            <person name="Kurokawa K."/>
            <person name="Ishii K."/>
            <person name="Yokoyama K."/>
            <person name="Han C.-G."/>
            <person name="Ohtsubo E."/>
            <person name="Nakayama K."/>
            <person name="Murata T."/>
            <person name="Tanaka M."/>
            <person name="Tobe T."/>
            <person name="Iida T."/>
            <person name="Takami H."/>
            <person name="Honda T."/>
            <person name="Sasakawa C."/>
            <person name="Ogasawara N."/>
            <person name="Yasunaga T."/>
            <person name="Kuhara S."/>
            <person name="Shiba T."/>
            <person name="Hattori M."/>
            <person name="Shinagawa H."/>
        </authorList>
    </citation>
    <scope>NUCLEOTIDE SEQUENCE [LARGE SCALE GENOMIC DNA]</scope>
    <source>
        <strain>O157:H7 / Sakai / RIMD 0509952 / EHEC</strain>
    </source>
</reference>
<sequence>MESKNKLKRGLSTRHIRFMALGSAIGTGLFYGSADAIKMAGPSVLLAYIIGGIAAYIIMRALGEMSVHNPAASSFSRYAQENLGPLAGYITGWTYCFEILIVAIADVTAFGIYMGVWFPTVPHWIWVLSVVLIICAVNLMSVKVFGELEFWFSFFKVATIIIMIVAGFGIIIWGIGNGGQPTGIHNLWSNGGFFSNGWLGMVMSLQMVMFAYGGIEIIGITAGEAKDPEKSIPRAINSVPMRILVFYVGTLFVIMSIYPWNQVGTAGSPFVLTFQHMGITFAASILNFVVLTASLSAINSDVFGVGRMLHGMAEQGSAPKIFSKTSRRGIPWVTVLVMTTALLFAVYLNYIMPENVFLVIASLATFATVWVWIMILLSQIAFRRRLPPEEVKALKFKVPGGVATTIGGLIFLLFIIGLIGYHPDTRISLYVGFAWIVVLLIGWMFKRRHDRQLAENQ</sequence>